<accession>Q5LQN0</accession>
<reference key="1">
    <citation type="journal article" date="2004" name="Nature">
        <title>Genome sequence of Silicibacter pomeroyi reveals adaptations to the marine environment.</title>
        <authorList>
            <person name="Moran M.A."/>
            <person name="Buchan A."/>
            <person name="Gonzalez J.M."/>
            <person name="Heidelberg J.F."/>
            <person name="Whitman W.B."/>
            <person name="Kiene R.P."/>
            <person name="Henriksen J.R."/>
            <person name="King G.M."/>
            <person name="Belas R."/>
            <person name="Fuqua C."/>
            <person name="Brinkac L.M."/>
            <person name="Lewis M."/>
            <person name="Johri S."/>
            <person name="Weaver B."/>
            <person name="Pai G."/>
            <person name="Eisen J.A."/>
            <person name="Rahe E."/>
            <person name="Sheldon W.M."/>
            <person name="Ye W."/>
            <person name="Miller T.R."/>
            <person name="Carlton J."/>
            <person name="Rasko D.A."/>
            <person name="Paulsen I.T."/>
            <person name="Ren Q."/>
            <person name="Daugherty S.C."/>
            <person name="DeBoy R.T."/>
            <person name="Dodson R.J."/>
            <person name="Durkin A.S."/>
            <person name="Madupu R."/>
            <person name="Nelson W.C."/>
            <person name="Sullivan S.A."/>
            <person name="Rosovitz M.J."/>
            <person name="Haft D.H."/>
            <person name="Selengut J."/>
            <person name="Ward N."/>
        </authorList>
    </citation>
    <scope>NUCLEOTIDE SEQUENCE [LARGE SCALE GENOMIC DNA]</scope>
    <source>
        <strain>ATCC 700808 / DSM 15171 / DSS-3</strain>
    </source>
</reference>
<reference key="2">
    <citation type="journal article" date="2014" name="Stand. Genomic Sci.">
        <title>An updated genome annotation for the model marine bacterium Ruegeria pomeroyi DSS-3.</title>
        <authorList>
            <person name="Rivers A.R."/>
            <person name="Smith C.B."/>
            <person name="Moran M.A."/>
        </authorList>
    </citation>
    <scope>GENOME REANNOTATION</scope>
    <source>
        <strain>ATCC 700808 / DSM 15171 / DSS-3</strain>
    </source>
</reference>
<dbReference type="EC" id="2.1.1.182" evidence="1"/>
<dbReference type="EMBL" id="CP000031">
    <property type="protein sequence ID" value="AAV95712.1"/>
    <property type="molecule type" value="Genomic_DNA"/>
</dbReference>
<dbReference type="RefSeq" id="WP_011048167.1">
    <property type="nucleotide sequence ID" value="NC_003911.12"/>
</dbReference>
<dbReference type="SMR" id="Q5LQN0"/>
<dbReference type="STRING" id="246200.SPO2458"/>
<dbReference type="PaxDb" id="246200-SPO2458"/>
<dbReference type="KEGG" id="sil:SPO2458"/>
<dbReference type="eggNOG" id="COG0030">
    <property type="taxonomic scope" value="Bacteria"/>
</dbReference>
<dbReference type="HOGENOM" id="CLU_041220_0_1_5"/>
<dbReference type="OrthoDB" id="9814755at2"/>
<dbReference type="Proteomes" id="UP000001023">
    <property type="component" value="Chromosome"/>
</dbReference>
<dbReference type="GO" id="GO:0005829">
    <property type="term" value="C:cytosol"/>
    <property type="evidence" value="ECO:0007669"/>
    <property type="project" value="TreeGrafter"/>
</dbReference>
<dbReference type="GO" id="GO:0052908">
    <property type="term" value="F:16S rRNA (adenine(1518)-N(6)/adenine(1519)-N(6))-dimethyltransferase activity"/>
    <property type="evidence" value="ECO:0007669"/>
    <property type="project" value="UniProtKB-EC"/>
</dbReference>
<dbReference type="GO" id="GO:0003723">
    <property type="term" value="F:RNA binding"/>
    <property type="evidence" value="ECO:0007669"/>
    <property type="project" value="UniProtKB-KW"/>
</dbReference>
<dbReference type="CDD" id="cd02440">
    <property type="entry name" value="AdoMet_MTases"/>
    <property type="match status" value="1"/>
</dbReference>
<dbReference type="FunFam" id="1.10.8.100:FF:000001">
    <property type="entry name" value="Ribosomal RNA small subunit methyltransferase A"/>
    <property type="match status" value="1"/>
</dbReference>
<dbReference type="Gene3D" id="1.10.8.100">
    <property type="entry name" value="Ribosomal RNA adenine dimethylase-like, domain 2"/>
    <property type="match status" value="1"/>
</dbReference>
<dbReference type="Gene3D" id="3.40.50.150">
    <property type="entry name" value="Vaccinia Virus protein VP39"/>
    <property type="match status" value="1"/>
</dbReference>
<dbReference type="HAMAP" id="MF_00607">
    <property type="entry name" value="16SrRNA_methyltr_A"/>
    <property type="match status" value="1"/>
</dbReference>
<dbReference type="InterPro" id="IPR001737">
    <property type="entry name" value="KsgA/Erm"/>
</dbReference>
<dbReference type="InterPro" id="IPR023165">
    <property type="entry name" value="rRNA_Ade_diMease-like_C"/>
</dbReference>
<dbReference type="InterPro" id="IPR020596">
    <property type="entry name" value="rRNA_Ade_Mease_Trfase_CS"/>
</dbReference>
<dbReference type="InterPro" id="IPR020598">
    <property type="entry name" value="rRNA_Ade_methylase_Trfase_N"/>
</dbReference>
<dbReference type="InterPro" id="IPR011530">
    <property type="entry name" value="rRNA_adenine_dimethylase"/>
</dbReference>
<dbReference type="InterPro" id="IPR029063">
    <property type="entry name" value="SAM-dependent_MTases_sf"/>
</dbReference>
<dbReference type="NCBIfam" id="TIGR00755">
    <property type="entry name" value="ksgA"/>
    <property type="match status" value="1"/>
</dbReference>
<dbReference type="PANTHER" id="PTHR11727">
    <property type="entry name" value="DIMETHYLADENOSINE TRANSFERASE"/>
    <property type="match status" value="1"/>
</dbReference>
<dbReference type="PANTHER" id="PTHR11727:SF7">
    <property type="entry name" value="DIMETHYLADENOSINE TRANSFERASE-RELATED"/>
    <property type="match status" value="1"/>
</dbReference>
<dbReference type="Pfam" id="PF00398">
    <property type="entry name" value="RrnaAD"/>
    <property type="match status" value="1"/>
</dbReference>
<dbReference type="SMART" id="SM00650">
    <property type="entry name" value="rADc"/>
    <property type="match status" value="1"/>
</dbReference>
<dbReference type="SUPFAM" id="SSF53335">
    <property type="entry name" value="S-adenosyl-L-methionine-dependent methyltransferases"/>
    <property type="match status" value="1"/>
</dbReference>
<dbReference type="PROSITE" id="PS01131">
    <property type="entry name" value="RRNA_A_DIMETH"/>
    <property type="match status" value="1"/>
</dbReference>
<dbReference type="PROSITE" id="PS51689">
    <property type="entry name" value="SAM_RNA_A_N6_MT"/>
    <property type="match status" value="1"/>
</dbReference>
<organism>
    <name type="scientific">Ruegeria pomeroyi (strain ATCC 700808 / DSM 15171 / DSS-3)</name>
    <name type="common">Silicibacter pomeroyi</name>
    <dbReference type="NCBI Taxonomy" id="246200"/>
    <lineage>
        <taxon>Bacteria</taxon>
        <taxon>Pseudomonadati</taxon>
        <taxon>Pseudomonadota</taxon>
        <taxon>Alphaproteobacteria</taxon>
        <taxon>Rhodobacterales</taxon>
        <taxon>Roseobacteraceae</taxon>
        <taxon>Ruegeria</taxon>
    </lineage>
</organism>
<gene>
    <name evidence="1" type="primary">rsmA</name>
    <name evidence="1" type="synonym">ksgA</name>
    <name type="ordered locus">SPO2458</name>
</gene>
<keyword id="KW-0963">Cytoplasm</keyword>
<keyword id="KW-0489">Methyltransferase</keyword>
<keyword id="KW-1185">Reference proteome</keyword>
<keyword id="KW-0694">RNA-binding</keyword>
<keyword id="KW-0698">rRNA processing</keyword>
<keyword id="KW-0949">S-adenosyl-L-methionine</keyword>
<keyword id="KW-0808">Transferase</keyword>
<evidence type="ECO:0000255" key="1">
    <source>
        <dbReference type="HAMAP-Rule" id="MF_00607"/>
    </source>
</evidence>
<proteinExistence type="inferred from homology"/>
<name>RSMA_RUEPO</name>
<feature type="chain" id="PRO_0000101602" description="Ribosomal RNA small subunit methyltransferase A">
    <location>
        <begin position="1"/>
        <end position="279"/>
    </location>
</feature>
<feature type="binding site" evidence="1">
    <location>
        <position position="28"/>
    </location>
    <ligand>
        <name>S-adenosyl-L-methionine</name>
        <dbReference type="ChEBI" id="CHEBI:59789"/>
    </ligand>
</feature>
<feature type="binding site" evidence="1">
    <location>
        <position position="30"/>
    </location>
    <ligand>
        <name>S-adenosyl-L-methionine</name>
        <dbReference type="ChEBI" id="CHEBI:59789"/>
    </ligand>
</feature>
<feature type="binding site" evidence="1">
    <location>
        <position position="55"/>
    </location>
    <ligand>
        <name>S-adenosyl-L-methionine</name>
        <dbReference type="ChEBI" id="CHEBI:59789"/>
    </ligand>
</feature>
<feature type="binding site" evidence="1">
    <location>
        <position position="77"/>
    </location>
    <ligand>
        <name>S-adenosyl-L-methionine</name>
        <dbReference type="ChEBI" id="CHEBI:59789"/>
    </ligand>
</feature>
<feature type="binding site" evidence="1">
    <location>
        <position position="103"/>
    </location>
    <ligand>
        <name>S-adenosyl-L-methionine</name>
        <dbReference type="ChEBI" id="CHEBI:59789"/>
    </ligand>
</feature>
<feature type="binding site" evidence="1">
    <location>
        <position position="122"/>
    </location>
    <ligand>
        <name>S-adenosyl-L-methionine</name>
        <dbReference type="ChEBI" id="CHEBI:59789"/>
    </ligand>
</feature>
<sequence>MSAIDTLPPLREVIASHQLSARKSLGQNFLLDLNLTAKIARQAGDLSECDVLEIGPGPGGLTRGLLAEGARRVLAIEKDARCLPALAEIAAAYSGRLEVINGDALEIDPLAHMTPPIRIAANLPYNVGTELLVRWLTPRDWPPFWQSLTLMFQREVAERIVAKPGSKAYGRLALLAQWRAEARIVMSLPPEAFTPPPKVSSAVVHLTALPEPRFPADAAILSRVVAAAFNQRRKMLRAALKGQAPDIEDRLLAAGIKPTERAEQVPLEAFCALARELAR</sequence>
<protein>
    <recommendedName>
        <fullName evidence="1">Ribosomal RNA small subunit methyltransferase A</fullName>
        <ecNumber evidence="1">2.1.1.182</ecNumber>
    </recommendedName>
    <alternativeName>
        <fullName evidence="1">16S rRNA (adenine(1518)-N(6)/adenine(1519)-N(6))-dimethyltransferase</fullName>
    </alternativeName>
    <alternativeName>
        <fullName evidence="1">16S rRNA dimethyladenosine transferase</fullName>
    </alternativeName>
    <alternativeName>
        <fullName evidence="1">16S rRNA dimethylase</fullName>
    </alternativeName>
    <alternativeName>
        <fullName evidence="1">S-adenosylmethionine-6-N', N'-adenosyl(rRNA) dimethyltransferase</fullName>
    </alternativeName>
</protein>
<comment type="function">
    <text evidence="1">Specifically dimethylates two adjacent adenosines (A1518 and A1519) in the loop of a conserved hairpin near the 3'-end of 16S rRNA in the 30S particle. May play a critical role in biogenesis of 30S subunits.</text>
</comment>
<comment type="catalytic activity">
    <reaction evidence="1">
        <text>adenosine(1518)/adenosine(1519) in 16S rRNA + 4 S-adenosyl-L-methionine = N(6)-dimethyladenosine(1518)/N(6)-dimethyladenosine(1519) in 16S rRNA + 4 S-adenosyl-L-homocysteine + 4 H(+)</text>
        <dbReference type="Rhea" id="RHEA:19609"/>
        <dbReference type="Rhea" id="RHEA-COMP:10232"/>
        <dbReference type="Rhea" id="RHEA-COMP:10233"/>
        <dbReference type="ChEBI" id="CHEBI:15378"/>
        <dbReference type="ChEBI" id="CHEBI:57856"/>
        <dbReference type="ChEBI" id="CHEBI:59789"/>
        <dbReference type="ChEBI" id="CHEBI:74411"/>
        <dbReference type="ChEBI" id="CHEBI:74493"/>
        <dbReference type="EC" id="2.1.1.182"/>
    </reaction>
</comment>
<comment type="subcellular location">
    <subcellularLocation>
        <location evidence="1">Cytoplasm</location>
    </subcellularLocation>
</comment>
<comment type="similarity">
    <text evidence="1">Belongs to the class I-like SAM-binding methyltransferase superfamily. rRNA adenine N(6)-methyltransferase family. RsmA subfamily.</text>
</comment>